<gene>
    <name type="primary">PHR4</name>
</gene>
<organism>
    <name type="scientific">Euplotoides octocarinatus</name>
    <name type="common">Freshwater ciliate</name>
    <name type="synonym">Euplotes octocarinatus</name>
    <dbReference type="NCBI Taxonomy" id="2716877"/>
    <lineage>
        <taxon>Eukaryota</taxon>
        <taxon>Sar</taxon>
        <taxon>Alveolata</taxon>
        <taxon>Ciliophora</taxon>
        <taxon>Intramacronucleata</taxon>
        <taxon>Spirotrichea</taxon>
        <taxon>Hypotrichia</taxon>
        <taxon>Euplotida</taxon>
        <taxon>Euplotidae</taxon>
        <taxon>Euplotes</taxon>
    </lineage>
</organism>
<protein>
    <recommendedName>
        <fullName>Mating pheromone 4</fullName>
    </recommendedName>
</protein>
<comment type="function">
    <text>Mating ciliate pheromones (or gamones) are diffusible extracellular communication signals that distinguish different intraspecific classes of cells commonly referred to as 'mating types'. They prepare the latter for conjugation by changing their cell surface properties.</text>
</comment>
<comment type="subcellular location">
    <subcellularLocation>
        <location>Secreted</location>
    </subcellularLocation>
</comment>
<name>MER4_EUPOC</name>
<proteinExistence type="evidence at protein level"/>
<accession>P28716</accession>
<feature type="signal peptide" evidence="1">
    <location>
        <begin position="1"/>
        <end position="16"/>
    </location>
</feature>
<feature type="propeptide" id="PRO_0000008680" evidence="1">
    <location>
        <begin position="17"/>
        <end position="42"/>
    </location>
</feature>
<feature type="peptide" id="PRO_0000008681" description="Mating pheromone 4">
    <location>
        <begin position="43"/>
        <end position="127"/>
    </location>
</feature>
<reference key="1">
    <citation type="journal article" date="1992" name="Dev. Genet.">
        <title>Pheromone 4 gene of Euplotes octocarinatus.</title>
        <authorList>
            <person name="Meyer F."/>
            <person name="Schmidt H.J."/>
            <person name="Heckmann K."/>
        </authorList>
    </citation>
    <scope>NUCLEOTIDE SEQUENCE [GENOMIC DNA / MRNA]</scope>
    <scope>PROTEIN SEQUENCE OF 43-81</scope>
    <source>
        <strain>67(3)-X</strain>
    </source>
</reference>
<evidence type="ECO:0000255" key="1"/>
<keyword id="KW-0903">Direct protein sequencing</keyword>
<keyword id="KW-0588">Pheromone</keyword>
<keyword id="KW-0964">Secreted</keyword>
<keyword id="KW-0732">Signal</keyword>
<dbReference type="EMBL" id="X58838">
    <property type="protein sequence ID" value="CAA41647.1"/>
    <property type="molecule type" value="Genomic_DNA"/>
</dbReference>
<dbReference type="EMBL" id="X58837">
    <property type="protein sequence ID" value="CAA41646.1"/>
    <property type="molecule type" value="mRNA"/>
</dbReference>
<dbReference type="PIR" id="A48420">
    <property type="entry name" value="A48420"/>
</dbReference>
<dbReference type="GO" id="GO:0005576">
    <property type="term" value="C:extracellular region"/>
    <property type="evidence" value="ECO:0007669"/>
    <property type="project" value="UniProtKB-SubCell"/>
</dbReference>
<dbReference type="GO" id="GO:0005186">
    <property type="term" value="F:pheromone activity"/>
    <property type="evidence" value="ECO:0007669"/>
    <property type="project" value="UniProtKB-KW"/>
</dbReference>
<dbReference type="InterPro" id="IPR008612">
    <property type="entry name" value="Mating_pheromone_EUPOC"/>
</dbReference>
<dbReference type="Pfam" id="PF05842">
    <property type="entry name" value="Euplotes_phero"/>
    <property type="match status" value="1"/>
</dbReference>
<sequence>MKAIFIILAILMVTQAFKMTSKVKSMNMSRNMSKNTSTLGTKYTYGCPQTNTPTQQDCYDAMYYTFMAMCDLYPDPEHPMFPSYDSCQEESDSADEFYTNQCGCGGYGMAAAHDQVCLLALGVCIPE</sequence>